<organism>
    <name type="scientific">Staphylococcus aureus (strain MRSA252)</name>
    <dbReference type="NCBI Taxonomy" id="282458"/>
    <lineage>
        <taxon>Bacteria</taxon>
        <taxon>Bacillati</taxon>
        <taxon>Bacillota</taxon>
        <taxon>Bacilli</taxon>
        <taxon>Bacillales</taxon>
        <taxon>Staphylococcaceae</taxon>
        <taxon>Staphylococcus</taxon>
    </lineage>
</organism>
<proteinExistence type="inferred from homology"/>
<name>QOX2_STAAR</name>
<protein>
    <recommendedName>
        <fullName>Probable quinol oxidase subunit 2</fullName>
        <ecNumber>1.10.3.-</ecNumber>
    </recommendedName>
    <alternativeName>
        <fullName>Quinol oxidase polypeptide II</fullName>
    </alternativeName>
</protein>
<gene>
    <name type="primary">qoxA</name>
    <name type="ordered locus">SAR1034</name>
</gene>
<keyword id="KW-1003">Cell membrane</keyword>
<keyword id="KW-0249">Electron transport</keyword>
<keyword id="KW-0449">Lipoprotein</keyword>
<keyword id="KW-0472">Membrane</keyword>
<keyword id="KW-0560">Oxidoreductase</keyword>
<keyword id="KW-0564">Palmitate</keyword>
<keyword id="KW-0679">Respiratory chain</keyword>
<keyword id="KW-0732">Signal</keyword>
<keyword id="KW-0812">Transmembrane</keyword>
<keyword id="KW-1133">Transmembrane helix</keyword>
<keyword id="KW-0813">Transport</keyword>
<dbReference type="EC" id="1.10.3.-"/>
<dbReference type="EMBL" id="BX571856">
    <property type="protein sequence ID" value="CAG40038.1"/>
    <property type="molecule type" value="Genomic_DNA"/>
</dbReference>
<dbReference type="RefSeq" id="WP_000032836.1">
    <property type="nucleotide sequence ID" value="NC_002952.2"/>
</dbReference>
<dbReference type="SMR" id="Q6GI23"/>
<dbReference type="KEGG" id="sar:SAR1034"/>
<dbReference type="HOGENOM" id="CLU_036876_6_0_9"/>
<dbReference type="Proteomes" id="UP000000596">
    <property type="component" value="Chromosome"/>
</dbReference>
<dbReference type="GO" id="GO:0005886">
    <property type="term" value="C:plasma membrane"/>
    <property type="evidence" value="ECO:0007669"/>
    <property type="project" value="UniProtKB-SubCell"/>
</dbReference>
<dbReference type="GO" id="GO:0005507">
    <property type="term" value="F:copper ion binding"/>
    <property type="evidence" value="ECO:0007669"/>
    <property type="project" value="InterPro"/>
</dbReference>
<dbReference type="GO" id="GO:0009486">
    <property type="term" value="F:cytochrome bo3 ubiquinol oxidase activity"/>
    <property type="evidence" value="ECO:0007669"/>
    <property type="project" value="InterPro"/>
</dbReference>
<dbReference type="GO" id="GO:0004129">
    <property type="term" value="F:cytochrome-c oxidase activity"/>
    <property type="evidence" value="ECO:0007669"/>
    <property type="project" value="InterPro"/>
</dbReference>
<dbReference type="GO" id="GO:0016682">
    <property type="term" value="F:oxidoreductase activity, acting on diphenols and related substances as donors, oxygen as acceptor"/>
    <property type="evidence" value="ECO:0007669"/>
    <property type="project" value="InterPro"/>
</dbReference>
<dbReference type="GO" id="GO:0042773">
    <property type="term" value="P:ATP synthesis coupled electron transport"/>
    <property type="evidence" value="ECO:0007669"/>
    <property type="project" value="TreeGrafter"/>
</dbReference>
<dbReference type="CDD" id="cd04212">
    <property type="entry name" value="CuRO_UO_II"/>
    <property type="match status" value="1"/>
</dbReference>
<dbReference type="FunFam" id="2.60.40.420:FF:000014">
    <property type="entry name" value="Quinol oxidase subunit 2"/>
    <property type="match status" value="1"/>
</dbReference>
<dbReference type="Gene3D" id="1.10.287.90">
    <property type="match status" value="1"/>
</dbReference>
<dbReference type="Gene3D" id="2.60.40.420">
    <property type="entry name" value="Cupredoxins - blue copper proteins"/>
    <property type="match status" value="1"/>
</dbReference>
<dbReference type="InterPro" id="IPR045187">
    <property type="entry name" value="CcO_II"/>
</dbReference>
<dbReference type="InterPro" id="IPR002429">
    <property type="entry name" value="CcO_II-like_C"/>
</dbReference>
<dbReference type="InterPro" id="IPR008972">
    <property type="entry name" value="Cupredoxin"/>
</dbReference>
<dbReference type="InterPro" id="IPR034227">
    <property type="entry name" value="CuRO_UO_II"/>
</dbReference>
<dbReference type="InterPro" id="IPR011759">
    <property type="entry name" value="Cyt_c_oxidase_su2_TM_dom"/>
</dbReference>
<dbReference type="InterPro" id="IPR036257">
    <property type="entry name" value="Cyt_c_oxidase_su2_TM_sf"/>
</dbReference>
<dbReference type="InterPro" id="IPR006332">
    <property type="entry name" value="QoxA"/>
</dbReference>
<dbReference type="NCBIfam" id="TIGR01432">
    <property type="entry name" value="QOXA"/>
    <property type="match status" value="1"/>
</dbReference>
<dbReference type="PANTHER" id="PTHR22888:SF18">
    <property type="entry name" value="CYTOCHROME BO(3) UBIQUINOL OXIDASE SUBUNIT 2"/>
    <property type="match status" value="1"/>
</dbReference>
<dbReference type="PANTHER" id="PTHR22888">
    <property type="entry name" value="CYTOCHROME C OXIDASE, SUBUNIT II"/>
    <property type="match status" value="1"/>
</dbReference>
<dbReference type="Pfam" id="PF02790">
    <property type="entry name" value="COX2_TM"/>
    <property type="match status" value="1"/>
</dbReference>
<dbReference type="SUPFAM" id="SSF49503">
    <property type="entry name" value="Cupredoxins"/>
    <property type="match status" value="1"/>
</dbReference>
<dbReference type="SUPFAM" id="SSF81464">
    <property type="entry name" value="Cytochrome c oxidase subunit II-like, transmembrane region"/>
    <property type="match status" value="1"/>
</dbReference>
<dbReference type="PROSITE" id="PS50857">
    <property type="entry name" value="COX2_CUA"/>
    <property type="match status" value="1"/>
</dbReference>
<dbReference type="PROSITE" id="PS50999">
    <property type="entry name" value="COX2_TM"/>
    <property type="match status" value="1"/>
</dbReference>
<dbReference type="PROSITE" id="PS51257">
    <property type="entry name" value="PROKAR_LIPOPROTEIN"/>
    <property type="match status" value="1"/>
</dbReference>
<comment type="function">
    <text evidence="1">Catalyzes quinol oxidation with the concomitant reduction of oxygen to water. Subunit II transfers the electrons from a quinol to the binuclear center of the catalytic subunit I (By similarity).</text>
</comment>
<comment type="catalytic activity">
    <reaction>
        <text>2 a quinol + O2 = 2 a quinone + 2 H2O</text>
        <dbReference type="Rhea" id="RHEA:55376"/>
        <dbReference type="ChEBI" id="CHEBI:15377"/>
        <dbReference type="ChEBI" id="CHEBI:15379"/>
        <dbReference type="ChEBI" id="CHEBI:24646"/>
        <dbReference type="ChEBI" id="CHEBI:132124"/>
    </reaction>
</comment>
<comment type="subcellular location">
    <subcellularLocation>
        <location evidence="3">Cell membrane</location>
        <topology evidence="1">Multi-pass membrane protein</topology>
    </subcellularLocation>
</comment>
<comment type="similarity">
    <text evidence="5">Belongs to the cytochrome c oxidase subunit 2 family.</text>
</comment>
<reference key="1">
    <citation type="journal article" date="2004" name="Proc. Natl. Acad. Sci. U.S.A.">
        <title>Complete genomes of two clinical Staphylococcus aureus strains: evidence for the rapid evolution of virulence and drug resistance.</title>
        <authorList>
            <person name="Holden M.T.G."/>
            <person name="Feil E.J."/>
            <person name="Lindsay J.A."/>
            <person name="Peacock S.J."/>
            <person name="Day N.P.J."/>
            <person name="Enright M.C."/>
            <person name="Foster T.J."/>
            <person name="Moore C.E."/>
            <person name="Hurst L."/>
            <person name="Atkin R."/>
            <person name="Barron A."/>
            <person name="Bason N."/>
            <person name="Bentley S.D."/>
            <person name="Chillingworth C."/>
            <person name="Chillingworth T."/>
            <person name="Churcher C."/>
            <person name="Clark L."/>
            <person name="Corton C."/>
            <person name="Cronin A."/>
            <person name="Doggett J."/>
            <person name="Dowd L."/>
            <person name="Feltwell T."/>
            <person name="Hance Z."/>
            <person name="Harris B."/>
            <person name="Hauser H."/>
            <person name="Holroyd S."/>
            <person name="Jagels K."/>
            <person name="James K.D."/>
            <person name="Lennard N."/>
            <person name="Line A."/>
            <person name="Mayes R."/>
            <person name="Moule S."/>
            <person name="Mungall K."/>
            <person name="Ormond D."/>
            <person name="Quail M.A."/>
            <person name="Rabbinowitsch E."/>
            <person name="Rutherford K.M."/>
            <person name="Sanders M."/>
            <person name="Sharp S."/>
            <person name="Simmonds M."/>
            <person name="Stevens K."/>
            <person name="Whitehead S."/>
            <person name="Barrell B.G."/>
            <person name="Spratt B.G."/>
            <person name="Parkhill J."/>
        </authorList>
    </citation>
    <scope>NUCLEOTIDE SEQUENCE [LARGE SCALE GENOMIC DNA]</scope>
    <source>
        <strain>MRSA252</strain>
    </source>
</reference>
<accession>Q6GI23</accession>
<feature type="signal peptide" evidence="3">
    <location>
        <begin position="1"/>
        <end position="19"/>
    </location>
</feature>
<feature type="chain" id="PRO_0000275873" description="Probable quinol oxidase subunit 2">
    <location>
        <begin position="20"/>
        <end position="366"/>
    </location>
</feature>
<feature type="transmembrane region" description="Helical" evidence="2">
    <location>
        <begin position="38"/>
        <end position="58"/>
    </location>
</feature>
<feature type="transmembrane region" description="Helical" evidence="2">
    <location>
        <begin position="80"/>
        <end position="100"/>
    </location>
</feature>
<feature type="region of interest" description="Disordered" evidence="4">
    <location>
        <begin position="330"/>
        <end position="366"/>
    </location>
</feature>
<feature type="compositionally biased region" description="Basic and acidic residues" evidence="4">
    <location>
        <begin position="335"/>
        <end position="366"/>
    </location>
</feature>
<feature type="lipid moiety-binding region" description="N-palmitoyl cysteine" evidence="3">
    <location>
        <position position="20"/>
    </location>
</feature>
<feature type="lipid moiety-binding region" description="S-diacylglycerol cysteine" evidence="3">
    <location>
        <position position="20"/>
    </location>
</feature>
<sequence>MSKFKSLLLLFGTLILLSGCSNIEIFNAKGPVASSQKFLILYSIVFMLVICFVVLGMFAIFIYKYSYNKNAESGKMHHNAIIETIWFVIPIIIVAALAIPTVKTLYDYEKPPKSEKDPMVVYAVSAGYKWFFAYPDEHIETVNTLTIPKDRPVVFKLQAMDTMTSFWIPQLGGQKYAMTGMTMNWTLEASQTGTFRGRNSNFNGEGFSRQTFKVNAVSQKDYDKWVKEVKGKKTLDQDTFDKQLLPSTPNKALEFNGTHMAFVDPAADPEYIFYAYKRFNFELKDPNFTSEENMFKDVSDKPLIPARKAQITNANYKRHGMKLMILGNDEPYNNEFKKDESKNAKEMKKISKDAQDQDNDDHGGGH</sequence>
<evidence type="ECO:0000250" key="1"/>
<evidence type="ECO:0000255" key="2"/>
<evidence type="ECO:0000255" key="3">
    <source>
        <dbReference type="PROSITE-ProRule" id="PRU00303"/>
    </source>
</evidence>
<evidence type="ECO:0000256" key="4">
    <source>
        <dbReference type="SAM" id="MobiDB-lite"/>
    </source>
</evidence>
<evidence type="ECO:0000305" key="5"/>